<feature type="chain" id="PRO_0000385238" description="Nuclear cap-binding protein subunit 1">
    <location>
        <begin position="1"/>
        <end position="800"/>
    </location>
</feature>
<feature type="domain" description="MIF4G">
    <location>
        <begin position="31"/>
        <end position="243"/>
    </location>
</feature>
<feature type="region of interest" description="Disordered" evidence="2">
    <location>
        <begin position="1"/>
        <end position="26"/>
    </location>
</feature>
<feature type="region of interest" description="Disordered" evidence="2">
    <location>
        <begin position="669"/>
        <end position="704"/>
    </location>
</feature>
<feature type="compositionally biased region" description="Basic and acidic residues" evidence="2">
    <location>
        <begin position="692"/>
        <end position="704"/>
    </location>
</feature>
<feature type="modified residue" description="Phosphothreonine" evidence="1">
    <location>
        <position position="9"/>
    </location>
</feature>
<evidence type="ECO:0000250" key="1"/>
<evidence type="ECO:0000256" key="2">
    <source>
        <dbReference type="SAM" id="MobiDB-lite"/>
    </source>
</evidence>
<evidence type="ECO:0000305" key="3"/>
<name>NCBP1_DROPS</name>
<sequence>MSRRRAHDTEDEGYDHRRNKRRRVSENQEIEDRLESLILRVGERSTSSVESNLEGLVSVLEADLGTFRLKILRILSDCAVRMPEKCTVYTTLVGLLNAKNYKFGGEFVDHMVKTFKESLKMCRWDAARYSLRFLADLVNCHVISATSLLQLLDTMIDVSNEDTVPQVRRDWFVFAVLSTLPWVGRDLYEKKESALESLLLRIEVYLNKRSKKHHNALRVWSSDAPHPQEEYLDCLWAQIRKLRQDNWAEKHIPRPYLTFDTILCEALQHNLPQIIPPPHNDAFVYPMPWVVYRMFDYTDCPDGPNLPGAHSIERFLIEEHLHHIIETYHHERKDCAAQLLSFPFKHKIPLEYCIVEVIFAELFHMPTPRYLDICYGSILIELCKLQPATLPQVLAQATEILFMRIDSMNTSCFDRFVNWFSYHLSNFKFTWSWDEWDSCLLLDGEHPRPKFIQEVLQKCLRLSYHQRITEMMPTTYGKLIPQVPVPNFKYASEEAASLPGTAVAHQLVVAIRQKCSPEEVVNILKEIPNSGYSGEEMSDGTFNALKIDVFVQTLLNLGSKSFSHSFAAISKFHSVFRALAETEEAQICVLHNIYELWSSHQQMMVVLVDKLLKLQIVDCSAVATWIFSKEMTSEFTKMYLWEILHLTIKKMNKHVIKLNTELSVAKDKLSKADSSSSESDEDAPTKRKKPITHADKPSEEAVERMEEKLEAANVNQKRLFLIVFQRFIMILSEHMLRSDTDGRDPDTDWYRWTIGRLQQVFLMHHEQVQKYSSTLETLLFTSDLDTHILEVFQQFVALRA</sequence>
<proteinExistence type="inferred from homology"/>
<dbReference type="EMBL" id="CH379064">
    <property type="protein sequence ID" value="EAL32228.1"/>
    <property type="molecule type" value="Genomic_DNA"/>
</dbReference>
<dbReference type="RefSeq" id="XP_001355171.1">
    <property type="nucleotide sequence ID" value="XM_001355135.3"/>
</dbReference>
<dbReference type="SMR" id="Q29G82"/>
<dbReference type="FunCoup" id="Q29G82">
    <property type="interactions" value="2709"/>
</dbReference>
<dbReference type="STRING" id="46245.Q29G82"/>
<dbReference type="EnsemblMetazoa" id="FBtr0285423">
    <property type="protein sequence ID" value="FBpp0283861"/>
    <property type="gene ID" value="FBgn0080044"/>
</dbReference>
<dbReference type="GeneID" id="4814640"/>
<dbReference type="KEGG" id="dpo:4814640"/>
<dbReference type="CTD" id="44409"/>
<dbReference type="eggNOG" id="KOG1104">
    <property type="taxonomic scope" value="Eukaryota"/>
</dbReference>
<dbReference type="HOGENOM" id="CLU_013207_0_0_1"/>
<dbReference type="InParanoid" id="Q29G82"/>
<dbReference type="OMA" id="CAAEGLM"/>
<dbReference type="PhylomeDB" id="Q29G82"/>
<dbReference type="ChiTaRS" id="Cbp80">
    <property type="organism name" value="fly"/>
</dbReference>
<dbReference type="Proteomes" id="UP000001819">
    <property type="component" value="Chromosome X"/>
</dbReference>
<dbReference type="Bgee" id="FBgn0080044">
    <property type="expression patterns" value="Expressed in female reproductive system and 3 other cell types or tissues"/>
</dbReference>
<dbReference type="ExpressionAtlas" id="Q29G82">
    <property type="expression patterns" value="baseline"/>
</dbReference>
<dbReference type="GO" id="GO:0005846">
    <property type="term" value="C:nuclear cap binding complex"/>
    <property type="evidence" value="ECO:0007669"/>
    <property type="project" value="InterPro"/>
</dbReference>
<dbReference type="GO" id="GO:0005634">
    <property type="term" value="C:nucleus"/>
    <property type="evidence" value="ECO:0007669"/>
    <property type="project" value="UniProtKB-SubCell"/>
</dbReference>
<dbReference type="GO" id="GO:0003729">
    <property type="term" value="F:mRNA binding"/>
    <property type="evidence" value="ECO:0007669"/>
    <property type="project" value="TreeGrafter"/>
</dbReference>
<dbReference type="GO" id="GO:0000339">
    <property type="term" value="F:RNA cap binding"/>
    <property type="evidence" value="ECO:0007669"/>
    <property type="project" value="InterPro"/>
</dbReference>
<dbReference type="GO" id="GO:0006370">
    <property type="term" value="P:7-methylguanosine mRNA capping"/>
    <property type="evidence" value="ECO:0007669"/>
    <property type="project" value="UniProtKB-KW"/>
</dbReference>
<dbReference type="GO" id="GO:0006406">
    <property type="term" value="P:mRNA export from nucleus"/>
    <property type="evidence" value="ECO:0007669"/>
    <property type="project" value="InterPro"/>
</dbReference>
<dbReference type="GO" id="GO:0000184">
    <property type="term" value="P:nuclear-transcribed mRNA catabolic process, nonsense-mediated decay"/>
    <property type="evidence" value="ECO:0007669"/>
    <property type="project" value="TreeGrafter"/>
</dbReference>
<dbReference type="GO" id="GO:0031047">
    <property type="term" value="P:regulatory ncRNA-mediated gene silencing"/>
    <property type="evidence" value="ECO:0007669"/>
    <property type="project" value="UniProtKB-KW"/>
</dbReference>
<dbReference type="GO" id="GO:0008380">
    <property type="term" value="P:RNA splicing"/>
    <property type="evidence" value="ECO:0007669"/>
    <property type="project" value="UniProtKB-KW"/>
</dbReference>
<dbReference type="FunFam" id="1.25.40.180:FF:000010">
    <property type="entry name" value="Nuclear cap-binding protein subunit 1"/>
    <property type="match status" value="1"/>
</dbReference>
<dbReference type="FunFam" id="1.25.40.180:FF:000041">
    <property type="entry name" value="Nuclear cap-binding protein subunit 1"/>
    <property type="match status" value="1"/>
</dbReference>
<dbReference type="Gene3D" id="1.25.40.180">
    <property type="match status" value="3"/>
</dbReference>
<dbReference type="InterPro" id="IPR016024">
    <property type="entry name" value="ARM-type_fold"/>
</dbReference>
<dbReference type="InterPro" id="IPR027159">
    <property type="entry name" value="CBP80"/>
</dbReference>
<dbReference type="InterPro" id="IPR015172">
    <property type="entry name" value="MIF4G-like_typ-1"/>
</dbReference>
<dbReference type="InterPro" id="IPR015174">
    <property type="entry name" value="MIF4G-like_typ-2"/>
</dbReference>
<dbReference type="InterPro" id="IPR003890">
    <property type="entry name" value="MIF4G-like_typ-3"/>
</dbReference>
<dbReference type="PANTHER" id="PTHR12412">
    <property type="entry name" value="CAP BINDING PROTEIN"/>
    <property type="match status" value="1"/>
</dbReference>
<dbReference type="PANTHER" id="PTHR12412:SF2">
    <property type="entry name" value="NUCLEAR CAP-BINDING PROTEIN SUBUNIT 1"/>
    <property type="match status" value="1"/>
</dbReference>
<dbReference type="Pfam" id="PF02854">
    <property type="entry name" value="MIF4G"/>
    <property type="match status" value="1"/>
</dbReference>
<dbReference type="Pfam" id="PF09088">
    <property type="entry name" value="MIF4G_like"/>
    <property type="match status" value="1"/>
</dbReference>
<dbReference type="Pfam" id="PF09090">
    <property type="entry name" value="MIF4G_like_2"/>
    <property type="match status" value="1"/>
</dbReference>
<dbReference type="SMART" id="SM00543">
    <property type="entry name" value="MIF4G"/>
    <property type="match status" value="1"/>
</dbReference>
<dbReference type="SUPFAM" id="SSF48371">
    <property type="entry name" value="ARM repeat"/>
    <property type="match status" value="3"/>
</dbReference>
<keyword id="KW-0506">mRNA capping</keyword>
<keyword id="KW-0507">mRNA processing</keyword>
<keyword id="KW-0508">mRNA splicing</keyword>
<keyword id="KW-0539">Nucleus</keyword>
<keyword id="KW-0597">Phosphoprotein</keyword>
<keyword id="KW-1185">Reference proteome</keyword>
<keyword id="KW-0943">RNA-mediated gene silencing</keyword>
<gene>
    <name type="primary">Cbp80</name>
    <name type="ORF">GA20048</name>
</gene>
<comment type="function">
    <text evidence="1">Component of the cap-binding complex (CBC), which binds cotranscriptionally to the 5'-cap of pre-mRNAs and is involved in various processes such as pre-mRNA splicing and RNA-mediated gene silencing (RNAi). The CBC complex is involved in miRNA-mediated RNA interference via its interaction with Ars2 and is required for primary microRNAs (miRNAs) processing. Also involved in innate immunity via the short interfering RNAs (siRNAs) processing machinery by restricting the viral RNA production. In the CBC complex, Cbp80 does not bind directly capped RNAs (m7GpppG-capped RNA) but is required to stabilize the movement of the N-terminal loop of Cbp20 and lock the CBC into a high affinity cap-binding state with the cap structure (By similarity).</text>
</comment>
<comment type="subunit">
    <text evidence="1">Component of the nuclear cap-binding complex (CBC), a heterodimer composed of Cbp80 and Cbp20 that interacts with m7GpppG-capped RNA.</text>
</comment>
<comment type="subcellular location">
    <subcellularLocation>
        <location evidence="1">Nucleus</location>
    </subcellularLocation>
</comment>
<comment type="similarity">
    <text evidence="3">Belongs to the NCBP1 family.</text>
</comment>
<accession>Q29G82</accession>
<reference key="1">
    <citation type="journal article" date="2005" name="Genome Res.">
        <title>Comparative genome sequencing of Drosophila pseudoobscura: chromosomal, gene, and cis-element evolution.</title>
        <authorList>
            <person name="Richards S."/>
            <person name="Liu Y."/>
            <person name="Bettencourt B.R."/>
            <person name="Hradecky P."/>
            <person name="Letovsky S."/>
            <person name="Nielsen R."/>
            <person name="Thornton K."/>
            <person name="Hubisz M.J."/>
            <person name="Chen R."/>
            <person name="Meisel R.P."/>
            <person name="Couronne O."/>
            <person name="Hua S."/>
            <person name="Smith M.A."/>
            <person name="Zhang P."/>
            <person name="Liu J."/>
            <person name="Bussemaker H.J."/>
            <person name="van Batenburg M.F."/>
            <person name="Howells S.L."/>
            <person name="Scherer S.E."/>
            <person name="Sodergren E."/>
            <person name="Matthews B.B."/>
            <person name="Crosby M.A."/>
            <person name="Schroeder A.J."/>
            <person name="Ortiz-Barrientos D."/>
            <person name="Rives C.M."/>
            <person name="Metzker M.L."/>
            <person name="Muzny D.M."/>
            <person name="Scott G."/>
            <person name="Steffen D."/>
            <person name="Wheeler D.A."/>
            <person name="Worley K.C."/>
            <person name="Havlak P."/>
            <person name="Durbin K.J."/>
            <person name="Egan A."/>
            <person name="Gill R."/>
            <person name="Hume J."/>
            <person name="Morgan M.B."/>
            <person name="Miner G."/>
            <person name="Hamilton C."/>
            <person name="Huang Y."/>
            <person name="Waldron L."/>
            <person name="Verduzco D."/>
            <person name="Clerc-Blankenburg K.P."/>
            <person name="Dubchak I."/>
            <person name="Noor M.A.F."/>
            <person name="Anderson W."/>
            <person name="White K.P."/>
            <person name="Clark A.G."/>
            <person name="Schaeffer S.W."/>
            <person name="Gelbart W.M."/>
            <person name="Weinstock G.M."/>
            <person name="Gibbs R.A."/>
        </authorList>
    </citation>
    <scope>NUCLEOTIDE SEQUENCE [LARGE SCALE GENOMIC DNA]</scope>
    <source>
        <strain>MV2-25 / Tucson 14011-0121.94</strain>
    </source>
</reference>
<protein>
    <recommendedName>
        <fullName>Nuclear cap-binding protein subunit 1</fullName>
    </recommendedName>
    <alternativeName>
        <fullName>80 kDa nuclear cap-binding protein</fullName>
        <shortName>CBP80</shortName>
        <shortName>NCBP 80 kDa subunit</shortName>
    </alternativeName>
</protein>
<organism>
    <name type="scientific">Drosophila pseudoobscura pseudoobscura</name>
    <name type="common">Fruit fly</name>
    <dbReference type="NCBI Taxonomy" id="46245"/>
    <lineage>
        <taxon>Eukaryota</taxon>
        <taxon>Metazoa</taxon>
        <taxon>Ecdysozoa</taxon>
        <taxon>Arthropoda</taxon>
        <taxon>Hexapoda</taxon>
        <taxon>Insecta</taxon>
        <taxon>Pterygota</taxon>
        <taxon>Neoptera</taxon>
        <taxon>Endopterygota</taxon>
        <taxon>Diptera</taxon>
        <taxon>Brachycera</taxon>
        <taxon>Muscomorpha</taxon>
        <taxon>Ephydroidea</taxon>
        <taxon>Drosophilidae</taxon>
        <taxon>Drosophila</taxon>
        <taxon>Sophophora</taxon>
    </lineage>
</organism>